<protein>
    <recommendedName>
        <fullName>Amyloid-beta A4 precursor protein-binding family A member 3</fullName>
    </recommendedName>
    <alternativeName>
        <fullName>Adapter protein X11gamma</fullName>
    </alternativeName>
    <alternativeName>
        <fullName>Neuron-specific X11L2 protein</fullName>
    </alternativeName>
    <alternativeName>
        <fullName>Neuronal Munc18-1-interacting protein 3</fullName>
        <shortName>Mint-3</shortName>
    </alternativeName>
</protein>
<accession>O70248</accession>
<accession>B1WBQ3</accession>
<comment type="function">
    <text evidence="1">May modulate processing of the amyloid-beta precursor protein (APP) and hence formation of APP-beta. May enhance the activity of HIF1A in macrophages by inhibiting the activity of HIF1AN (By similarity).</text>
</comment>
<comment type="subunit">
    <text evidence="1 2">Binds to the cytoplasmic domain of amyloid protein (APP). Interacts with HIF1AN (via N-terminus) (By similarity). Interacts with NECAB3; seems to mediate the interaction between NECAB3 and HIF1AN (By similarity).</text>
</comment>
<comment type="subcellular location">
    <subcellularLocation>
        <location evidence="1">Cytoplasm</location>
        <location evidence="1">Perinuclear region</location>
    </subcellularLocation>
</comment>
<comment type="tissue specificity">
    <text>Ubiquitous.</text>
</comment>
<comment type="domain">
    <text>Composed of an N-terminal domain, a middle phosphotyrosine-binding domain (PID/PTB) that mediates binding with the cytoplasmic domain of the amyloid-beta precursor protein, and two C-terminal PDZ domains thought to attach proteins to the plasma membrane.</text>
</comment>
<sequence>MEFLPEPQHPPGPPTMDLEEPKGPEVPSEDHPSNTQWALGPRGPDTLSEMELDTSSVRALVQQLEALPSDLGGQFPDGAPCPLHIATGQGLATQENLDAGGLLSAEAGGDNLLGLLRCEASLPAQSVPPDPAQAAPRLLQPPEDPGGDPGWMEGTEPADNRSSSSSPELWLETAPLVTHRDPPVGTQSQETLASCPAVSEVPGPCGQEELMDGVLFGAKYLGSTQLLSERNPPPSTRMGQAQEAMDRVKAPEGETQPMTEVDIFISTKRVKVLAADSQDALMDHALQTISYIADIGPVLVLMARRRLAKRTTSQDRQRQLYKMLCHVFHSEDAQLIAQAIGQAFSIAYSQFLQENRIDPSQVGMQPSASASHPHNGDLDHFCNSQNCREVCIQKRPGEGLGVALVESGWGSLLPTAVIANLLHGGPAERCGALSIGDRVTAINGTSLVGLSLAACQAAVREVRRHSSVTLSIIHCPPVTTAVIHRPHVREQLGFCVENGIICSLLRGSAAERGGVRVGHRIIEVNGQSVVAMPHARIIQLLTETREIHIKTMPAATYRLLTGQEQPVYL</sequence>
<evidence type="ECO:0000250" key="1"/>
<evidence type="ECO:0000250" key="2">
    <source>
        <dbReference type="UniProtKB" id="O96018"/>
    </source>
</evidence>
<evidence type="ECO:0000255" key="3">
    <source>
        <dbReference type="PROSITE-ProRule" id="PRU00143"/>
    </source>
</evidence>
<evidence type="ECO:0000255" key="4">
    <source>
        <dbReference type="PROSITE-ProRule" id="PRU00148"/>
    </source>
</evidence>
<evidence type="ECO:0000256" key="5">
    <source>
        <dbReference type="SAM" id="MobiDB-lite"/>
    </source>
</evidence>
<evidence type="ECO:0000305" key="6"/>
<evidence type="ECO:0007744" key="7">
    <source>
    </source>
</evidence>
<keyword id="KW-0007">Acetylation</keyword>
<keyword id="KW-0963">Cytoplasm</keyword>
<keyword id="KW-0597">Phosphoprotein</keyword>
<keyword id="KW-0653">Protein transport</keyword>
<keyword id="KW-1185">Reference proteome</keyword>
<keyword id="KW-0677">Repeat</keyword>
<keyword id="KW-0813">Transport</keyword>
<feature type="chain" id="PRO_0000064622" description="Amyloid-beta A4 precursor protein-binding family A member 3">
    <location>
        <begin position="1"/>
        <end position="569"/>
    </location>
</feature>
<feature type="domain" description="PID" evidence="4">
    <location>
        <begin position="212"/>
        <end position="376"/>
    </location>
</feature>
<feature type="domain" description="PDZ 1" evidence="3">
    <location>
        <begin position="389"/>
        <end position="475"/>
    </location>
</feature>
<feature type="domain" description="PDZ 2" evidence="3">
    <location>
        <begin position="480"/>
        <end position="554"/>
    </location>
</feature>
<feature type="region of interest" description="Disordered" evidence="5">
    <location>
        <begin position="1"/>
        <end position="53"/>
    </location>
</feature>
<feature type="region of interest" description="Disordered" evidence="5">
    <location>
        <begin position="124"/>
        <end position="168"/>
    </location>
</feature>
<feature type="compositionally biased region" description="Basic and acidic residues" evidence="5">
    <location>
        <begin position="19"/>
        <end position="32"/>
    </location>
</feature>
<feature type="compositionally biased region" description="Low complexity" evidence="5">
    <location>
        <begin position="132"/>
        <end position="141"/>
    </location>
</feature>
<feature type="modified residue" description="N-acetylmethionine" evidence="2">
    <location>
        <position position="1"/>
    </location>
</feature>
<feature type="modified residue" description="Phosphoserine" evidence="7">
    <location>
        <position position="166"/>
    </location>
</feature>
<feature type="modified residue" description="Phosphoserine" evidence="2">
    <location>
        <position position="367"/>
    </location>
</feature>
<feature type="sequence conflict" description="In Ref. 1; AAC17978." evidence="6" ref="1">
    <original>W</original>
    <variation>G</variation>
    <location>
        <position position="37"/>
    </location>
</feature>
<feature type="sequence conflict" description="In Ref. 1; AAC17978." evidence="6" ref="1">
    <original>T</original>
    <variation>S</variation>
    <location>
        <position position="255"/>
    </location>
</feature>
<feature type="sequence conflict" description="In Ref. 1; AAC17978." evidence="6" ref="1">
    <original>R</original>
    <variation>G</variation>
    <location>
        <position position="356"/>
    </location>
</feature>
<dbReference type="EMBL" id="AF029109">
    <property type="protein sequence ID" value="AAC17978.1"/>
    <property type="molecule type" value="mRNA"/>
</dbReference>
<dbReference type="EMBL" id="CH474029">
    <property type="protein sequence ID" value="EDL89170.1"/>
    <property type="molecule type" value="Genomic_DNA"/>
</dbReference>
<dbReference type="EMBL" id="BC161842">
    <property type="protein sequence ID" value="AAI61842.1"/>
    <property type="molecule type" value="mRNA"/>
</dbReference>
<dbReference type="RefSeq" id="NP_113969.1">
    <property type="nucleotide sequence ID" value="NM_031781.1"/>
</dbReference>
<dbReference type="RefSeq" id="XP_006241082.1">
    <property type="nucleotide sequence ID" value="XM_006241020.4"/>
</dbReference>
<dbReference type="RefSeq" id="XP_038935884.1">
    <property type="nucleotide sequence ID" value="XM_039079956.2"/>
</dbReference>
<dbReference type="SMR" id="O70248"/>
<dbReference type="BioGRID" id="249776">
    <property type="interactions" value="1"/>
</dbReference>
<dbReference type="FunCoup" id="O70248">
    <property type="interactions" value="237"/>
</dbReference>
<dbReference type="IntAct" id="O70248">
    <property type="interactions" value="4"/>
</dbReference>
<dbReference type="MINT" id="O70248"/>
<dbReference type="STRING" id="10116.ENSRNOP00000027784"/>
<dbReference type="iPTMnet" id="O70248"/>
<dbReference type="PhosphoSitePlus" id="O70248"/>
<dbReference type="PaxDb" id="10116-ENSRNOP00000027784"/>
<dbReference type="Ensembl" id="ENSRNOT00000027784.5">
    <property type="protein sequence ID" value="ENSRNOP00000027784.2"/>
    <property type="gene ID" value="ENSRNOG00000020466.7"/>
</dbReference>
<dbReference type="GeneID" id="83611"/>
<dbReference type="KEGG" id="rno:83611"/>
<dbReference type="UCSC" id="RGD:620846">
    <property type="organism name" value="rat"/>
</dbReference>
<dbReference type="AGR" id="RGD:620846"/>
<dbReference type="CTD" id="9546"/>
<dbReference type="RGD" id="620846">
    <property type="gene designation" value="Apba3"/>
</dbReference>
<dbReference type="eggNOG" id="KOG3605">
    <property type="taxonomic scope" value="Eukaryota"/>
</dbReference>
<dbReference type="GeneTree" id="ENSGT00940000160384"/>
<dbReference type="HOGENOM" id="CLU_013563_2_0_1"/>
<dbReference type="InParanoid" id="O70248"/>
<dbReference type="OMA" id="HCEECPP"/>
<dbReference type="OrthoDB" id="5987010at2759"/>
<dbReference type="TreeFam" id="TF315245"/>
<dbReference type="PRO" id="PR:O70248"/>
<dbReference type="Proteomes" id="UP000002494">
    <property type="component" value="Chromosome 7"/>
</dbReference>
<dbReference type="Proteomes" id="UP000234681">
    <property type="component" value="Chromosome 7"/>
</dbReference>
<dbReference type="Bgee" id="ENSRNOG00000020466">
    <property type="expression patterns" value="Expressed in skeletal muscle tissue and 19 other cell types or tissues"/>
</dbReference>
<dbReference type="GO" id="GO:0005737">
    <property type="term" value="C:cytoplasm"/>
    <property type="evidence" value="ECO:0000318"/>
    <property type="project" value="GO_Central"/>
</dbReference>
<dbReference type="GO" id="GO:0043197">
    <property type="term" value="C:dendritic spine"/>
    <property type="evidence" value="ECO:0000318"/>
    <property type="project" value="GO_Central"/>
</dbReference>
<dbReference type="GO" id="GO:0048471">
    <property type="term" value="C:perinuclear region of cytoplasm"/>
    <property type="evidence" value="ECO:0000266"/>
    <property type="project" value="RGD"/>
</dbReference>
<dbReference type="GO" id="GO:0005886">
    <property type="term" value="C:plasma membrane"/>
    <property type="evidence" value="ECO:0000318"/>
    <property type="project" value="GO_Central"/>
</dbReference>
<dbReference type="GO" id="GO:0001540">
    <property type="term" value="F:amyloid-beta binding"/>
    <property type="evidence" value="ECO:0000353"/>
    <property type="project" value="RGD"/>
</dbReference>
<dbReference type="GO" id="GO:0019899">
    <property type="term" value="F:enzyme binding"/>
    <property type="evidence" value="ECO:0000266"/>
    <property type="project" value="RGD"/>
</dbReference>
<dbReference type="GO" id="GO:0004857">
    <property type="term" value="F:enzyme inhibitor activity"/>
    <property type="evidence" value="ECO:0000266"/>
    <property type="project" value="RGD"/>
</dbReference>
<dbReference type="GO" id="GO:0007268">
    <property type="term" value="P:chemical synaptic transmission"/>
    <property type="evidence" value="ECO:0000266"/>
    <property type="project" value="RGD"/>
</dbReference>
<dbReference type="GO" id="GO:0001701">
    <property type="term" value="P:in utero embryonic development"/>
    <property type="evidence" value="ECO:0000266"/>
    <property type="project" value="RGD"/>
</dbReference>
<dbReference type="GO" id="GO:0015031">
    <property type="term" value="P:protein transport"/>
    <property type="evidence" value="ECO:0007669"/>
    <property type="project" value="UniProtKB-KW"/>
</dbReference>
<dbReference type="GO" id="GO:0010468">
    <property type="term" value="P:regulation of gene expression"/>
    <property type="evidence" value="ECO:0000266"/>
    <property type="project" value="RGD"/>
</dbReference>
<dbReference type="CDD" id="cd06720">
    <property type="entry name" value="PDZ1_APBA1_3-like"/>
    <property type="match status" value="1"/>
</dbReference>
<dbReference type="CDD" id="cd06793">
    <property type="entry name" value="PDZ2_APBA1_3-like"/>
    <property type="match status" value="1"/>
</dbReference>
<dbReference type="CDD" id="cd01208">
    <property type="entry name" value="PTB_X11"/>
    <property type="match status" value="1"/>
</dbReference>
<dbReference type="FunFam" id="2.30.29.30:FF:000222">
    <property type="entry name" value="amyloid beta A4 precursor protein-binding family A member 3"/>
    <property type="match status" value="1"/>
</dbReference>
<dbReference type="FunFam" id="2.30.42.10:FF:000007">
    <property type="entry name" value="Amyloid beta A4 protein-binding family A member"/>
    <property type="match status" value="1"/>
</dbReference>
<dbReference type="Gene3D" id="2.30.42.10">
    <property type="match status" value="2"/>
</dbReference>
<dbReference type="Gene3D" id="2.30.29.30">
    <property type="entry name" value="Pleckstrin-homology domain (PH domain)/Phosphotyrosine-binding domain (PTB)"/>
    <property type="match status" value="1"/>
</dbReference>
<dbReference type="InterPro" id="IPR051230">
    <property type="entry name" value="APP-Binding"/>
</dbReference>
<dbReference type="InterPro" id="IPR001478">
    <property type="entry name" value="PDZ"/>
</dbReference>
<dbReference type="InterPro" id="IPR036034">
    <property type="entry name" value="PDZ_sf"/>
</dbReference>
<dbReference type="InterPro" id="IPR011993">
    <property type="entry name" value="PH-like_dom_sf"/>
</dbReference>
<dbReference type="InterPro" id="IPR006020">
    <property type="entry name" value="PTB/PI_dom"/>
</dbReference>
<dbReference type="PANTHER" id="PTHR12345:SF9">
    <property type="entry name" value="AMYLOID-BETA A4 PRECURSOR PROTEIN-BINDING FAMILY A MEMBER 3"/>
    <property type="match status" value="1"/>
</dbReference>
<dbReference type="PANTHER" id="PTHR12345">
    <property type="entry name" value="SYNTENIN RELATED"/>
    <property type="match status" value="1"/>
</dbReference>
<dbReference type="Pfam" id="PF00595">
    <property type="entry name" value="PDZ"/>
    <property type="match status" value="2"/>
</dbReference>
<dbReference type="Pfam" id="PF00640">
    <property type="entry name" value="PID"/>
    <property type="match status" value="1"/>
</dbReference>
<dbReference type="SMART" id="SM00228">
    <property type="entry name" value="PDZ"/>
    <property type="match status" value="2"/>
</dbReference>
<dbReference type="SMART" id="SM00462">
    <property type="entry name" value="PTB"/>
    <property type="match status" value="1"/>
</dbReference>
<dbReference type="SUPFAM" id="SSF50156">
    <property type="entry name" value="PDZ domain-like"/>
    <property type="match status" value="2"/>
</dbReference>
<dbReference type="SUPFAM" id="SSF50729">
    <property type="entry name" value="PH domain-like"/>
    <property type="match status" value="1"/>
</dbReference>
<dbReference type="PROSITE" id="PS50106">
    <property type="entry name" value="PDZ"/>
    <property type="match status" value="2"/>
</dbReference>
<dbReference type="PROSITE" id="PS01179">
    <property type="entry name" value="PID"/>
    <property type="match status" value="1"/>
</dbReference>
<proteinExistence type="evidence at protein level"/>
<name>APBA3_RAT</name>
<organism>
    <name type="scientific">Rattus norvegicus</name>
    <name type="common">Rat</name>
    <dbReference type="NCBI Taxonomy" id="10116"/>
    <lineage>
        <taxon>Eukaryota</taxon>
        <taxon>Metazoa</taxon>
        <taxon>Chordata</taxon>
        <taxon>Craniata</taxon>
        <taxon>Vertebrata</taxon>
        <taxon>Euteleostomi</taxon>
        <taxon>Mammalia</taxon>
        <taxon>Eutheria</taxon>
        <taxon>Euarchontoglires</taxon>
        <taxon>Glires</taxon>
        <taxon>Rodentia</taxon>
        <taxon>Myomorpha</taxon>
        <taxon>Muroidea</taxon>
        <taxon>Muridae</taxon>
        <taxon>Murinae</taxon>
        <taxon>Rattus</taxon>
    </lineage>
</organism>
<gene>
    <name type="primary">Apba3</name>
    <name type="synonym">Mint3</name>
</gene>
<reference key="1">
    <citation type="journal article" date="1998" name="Eur. J. Cell Biol.">
        <title>Mint 3: a ubiquitous mint isoform that does not bind to munc18-1 or -2.</title>
        <authorList>
            <person name="Okamoto M."/>
            <person name="Suedhof T.C."/>
        </authorList>
    </citation>
    <scope>NUCLEOTIDE SEQUENCE [MRNA]</scope>
</reference>
<reference key="2">
    <citation type="submission" date="2005-07" db="EMBL/GenBank/DDBJ databases">
        <authorList>
            <person name="Mural R.J."/>
            <person name="Adams M.D."/>
            <person name="Myers E.W."/>
            <person name="Smith H.O."/>
            <person name="Venter J.C."/>
        </authorList>
    </citation>
    <scope>NUCLEOTIDE SEQUENCE [LARGE SCALE GENOMIC DNA]</scope>
</reference>
<reference key="3">
    <citation type="journal article" date="2004" name="Genome Res.">
        <title>The status, quality, and expansion of the NIH full-length cDNA project: the Mammalian Gene Collection (MGC).</title>
        <authorList>
            <consortium name="The MGC Project Team"/>
        </authorList>
    </citation>
    <scope>NUCLEOTIDE SEQUENCE [LARGE SCALE MRNA]</scope>
    <source>
        <strain>Brown Norway/Mcwi</strain>
        <tissue>Embryonic spleen</tissue>
    </source>
</reference>
<reference key="4">
    <citation type="journal article" date="2012" name="Nat. Commun.">
        <title>Quantitative maps of protein phosphorylation sites across 14 different rat organs and tissues.</title>
        <authorList>
            <person name="Lundby A."/>
            <person name="Secher A."/>
            <person name="Lage K."/>
            <person name="Nordsborg N.B."/>
            <person name="Dmytriyev A."/>
            <person name="Lundby C."/>
            <person name="Olsen J.V."/>
        </authorList>
    </citation>
    <scope>PHOSPHORYLATION [LARGE SCALE ANALYSIS] AT SER-166</scope>
    <scope>IDENTIFICATION BY MASS SPECTROMETRY [LARGE SCALE ANALYSIS]</scope>
</reference>